<comment type="function">
    <text evidence="1">Catalyzes the attachment of isoleucine to tRNA(Ile). As IleRS can inadvertently accommodate and process structurally similar amino acids such as valine, to avoid such errors it has two additional distinct tRNA(Ile)-dependent editing activities. One activity is designated as 'pretransfer' editing and involves the hydrolysis of activated Val-AMP. The other activity is designated 'posttransfer' editing and involves deacylation of mischarged Val-tRNA(Ile).</text>
</comment>
<comment type="catalytic activity">
    <reaction evidence="1">
        <text>tRNA(Ile) + L-isoleucine + ATP = L-isoleucyl-tRNA(Ile) + AMP + diphosphate</text>
        <dbReference type="Rhea" id="RHEA:11060"/>
        <dbReference type="Rhea" id="RHEA-COMP:9666"/>
        <dbReference type="Rhea" id="RHEA-COMP:9695"/>
        <dbReference type="ChEBI" id="CHEBI:30616"/>
        <dbReference type="ChEBI" id="CHEBI:33019"/>
        <dbReference type="ChEBI" id="CHEBI:58045"/>
        <dbReference type="ChEBI" id="CHEBI:78442"/>
        <dbReference type="ChEBI" id="CHEBI:78528"/>
        <dbReference type="ChEBI" id="CHEBI:456215"/>
        <dbReference type="EC" id="6.1.1.5"/>
    </reaction>
</comment>
<comment type="cofactor">
    <cofactor evidence="1">
        <name>Zn(2+)</name>
        <dbReference type="ChEBI" id="CHEBI:29105"/>
    </cofactor>
</comment>
<comment type="subunit">
    <text evidence="1">Monomer.</text>
</comment>
<comment type="subcellular location">
    <subcellularLocation>
        <location evidence="1">Cytoplasm</location>
    </subcellularLocation>
</comment>
<comment type="domain">
    <text evidence="1">IleRS has two distinct active sites: one for aminoacylation and one for editing. The misactivated valine is translocated from the active site to the editing site, which sterically excludes the correctly activated isoleucine. The single editing site contains two valyl binding pockets, one specific for each substrate (Val-AMP or Val-tRNA(Ile)).</text>
</comment>
<comment type="similarity">
    <text evidence="1">Belongs to the class-I aminoacyl-tRNA synthetase family. IleS type 2 subfamily.</text>
</comment>
<comment type="sequence caution" evidence="2">
    <conflict type="erroneous initiation">
        <sequence resource="EMBL-CDS" id="BAC18853"/>
    </conflict>
</comment>
<organism>
    <name type="scientific">Corynebacterium efficiens (strain DSM 44549 / YS-314 / AJ 12310 / JCM 11189 / NBRC 100395)</name>
    <dbReference type="NCBI Taxonomy" id="196164"/>
    <lineage>
        <taxon>Bacteria</taxon>
        <taxon>Bacillati</taxon>
        <taxon>Actinomycetota</taxon>
        <taxon>Actinomycetes</taxon>
        <taxon>Mycobacteriales</taxon>
        <taxon>Corynebacteriaceae</taxon>
        <taxon>Corynebacterium</taxon>
    </lineage>
</organism>
<dbReference type="EC" id="6.1.1.5" evidence="1"/>
<dbReference type="EMBL" id="BA000035">
    <property type="protein sequence ID" value="BAC18853.1"/>
    <property type="status" value="ALT_INIT"/>
    <property type="molecule type" value="Genomic_DNA"/>
</dbReference>
<dbReference type="RefSeq" id="WP_011075728.1">
    <property type="nucleotide sequence ID" value="NC_004369.1"/>
</dbReference>
<dbReference type="SMR" id="Q8FNV0"/>
<dbReference type="STRING" id="196164.gene:10742471"/>
<dbReference type="KEGG" id="cef:CE2043"/>
<dbReference type="eggNOG" id="COG0060">
    <property type="taxonomic scope" value="Bacteria"/>
</dbReference>
<dbReference type="HOGENOM" id="CLU_001493_1_1_11"/>
<dbReference type="OrthoDB" id="9810365at2"/>
<dbReference type="Proteomes" id="UP000001409">
    <property type="component" value="Chromosome"/>
</dbReference>
<dbReference type="GO" id="GO:0005737">
    <property type="term" value="C:cytoplasm"/>
    <property type="evidence" value="ECO:0007669"/>
    <property type="project" value="UniProtKB-SubCell"/>
</dbReference>
<dbReference type="GO" id="GO:0002161">
    <property type="term" value="F:aminoacyl-tRNA deacylase activity"/>
    <property type="evidence" value="ECO:0007669"/>
    <property type="project" value="InterPro"/>
</dbReference>
<dbReference type="GO" id="GO:0005524">
    <property type="term" value="F:ATP binding"/>
    <property type="evidence" value="ECO:0007669"/>
    <property type="project" value="UniProtKB-UniRule"/>
</dbReference>
<dbReference type="GO" id="GO:0004822">
    <property type="term" value="F:isoleucine-tRNA ligase activity"/>
    <property type="evidence" value="ECO:0007669"/>
    <property type="project" value="UniProtKB-UniRule"/>
</dbReference>
<dbReference type="GO" id="GO:0000049">
    <property type="term" value="F:tRNA binding"/>
    <property type="evidence" value="ECO:0007669"/>
    <property type="project" value="InterPro"/>
</dbReference>
<dbReference type="GO" id="GO:0008270">
    <property type="term" value="F:zinc ion binding"/>
    <property type="evidence" value="ECO:0007669"/>
    <property type="project" value="UniProtKB-UniRule"/>
</dbReference>
<dbReference type="GO" id="GO:0006428">
    <property type="term" value="P:isoleucyl-tRNA aminoacylation"/>
    <property type="evidence" value="ECO:0007669"/>
    <property type="project" value="UniProtKB-UniRule"/>
</dbReference>
<dbReference type="CDD" id="cd07961">
    <property type="entry name" value="Anticodon_Ia_Ile_ABEc"/>
    <property type="match status" value="1"/>
</dbReference>
<dbReference type="CDD" id="cd00818">
    <property type="entry name" value="IleRS_core"/>
    <property type="match status" value="1"/>
</dbReference>
<dbReference type="FunFam" id="3.40.50.620:FF:000063">
    <property type="entry name" value="Isoleucine--tRNA ligase"/>
    <property type="match status" value="1"/>
</dbReference>
<dbReference type="FunFam" id="3.40.50.620:FF:000075">
    <property type="entry name" value="Isoleucine--tRNA ligase"/>
    <property type="match status" value="1"/>
</dbReference>
<dbReference type="Gene3D" id="3.40.50.620">
    <property type="entry name" value="HUPs"/>
    <property type="match status" value="2"/>
</dbReference>
<dbReference type="Gene3D" id="1.10.730.10">
    <property type="entry name" value="Isoleucyl-tRNA Synthetase, Domain 1"/>
    <property type="match status" value="1"/>
</dbReference>
<dbReference type="HAMAP" id="MF_02003">
    <property type="entry name" value="Ile_tRNA_synth_type2"/>
    <property type="match status" value="1"/>
</dbReference>
<dbReference type="InterPro" id="IPR001412">
    <property type="entry name" value="aa-tRNA-synth_I_CS"/>
</dbReference>
<dbReference type="InterPro" id="IPR002300">
    <property type="entry name" value="aa-tRNA-synth_Ia"/>
</dbReference>
<dbReference type="InterPro" id="IPR033709">
    <property type="entry name" value="Anticodon_Ile_ABEc"/>
</dbReference>
<dbReference type="InterPro" id="IPR002301">
    <property type="entry name" value="Ile-tRNA-ligase"/>
</dbReference>
<dbReference type="InterPro" id="IPR023586">
    <property type="entry name" value="Ile-tRNA-ligase_type2"/>
</dbReference>
<dbReference type="InterPro" id="IPR013155">
    <property type="entry name" value="M/V/L/I-tRNA-synth_anticd-bd"/>
</dbReference>
<dbReference type="InterPro" id="IPR014729">
    <property type="entry name" value="Rossmann-like_a/b/a_fold"/>
</dbReference>
<dbReference type="InterPro" id="IPR009080">
    <property type="entry name" value="tRNAsynth_Ia_anticodon-bd"/>
</dbReference>
<dbReference type="InterPro" id="IPR009008">
    <property type="entry name" value="Val/Leu/Ile-tRNA-synth_edit"/>
</dbReference>
<dbReference type="NCBIfam" id="TIGR00392">
    <property type="entry name" value="ileS"/>
    <property type="match status" value="1"/>
</dbReference>
<dbReference type="PANTHER" id="PTHR42780:SF1">
    <property type="entry name" value="ISOLEUCINE--TRNA LIGASE, CYTOPLASMIC"/>
    <property type="match status" value="1"/>
</dbReference>
<dbReference type="PANTHER" id="PTHR42780">
    <property type="entry name" value="SOLEUCYL-TRNA SYNTHETASE"/>
    <property type="match status" value="1"/>
</dbReference>
<dbReference type="Pfam" id="PF08264">
    <property type="entry name" value="Anticodon_1"/>
    <property type="match status" value="1"/>
</dbReference>
<dbReference type="Pfam" id="PF19302">
    <property type="entry name" value="DUF5915"/>
    <property type="match status" value="1"/>
</dbReference>
<dbReference type="Pfam" id="PF00133">
    <property type="entry name" value="tRNA-synt_1"/>
    <property type="match status" value="1"/>
</dbReference>
<dbReference type="PRINTS" id="PR00984">
    <property type="entry name" value="TRNASYNTHILE"/>
</dbReference>
<dbReference type="SUPFAM" id="SSF47323">
    <property type="entry name" value="Anticodon-binding domain of a subclass of class I aminoacyl-tRNA synthetases"/>
    <property type="match status" value="1"/>
</dbReference>
<dbReference type="SUPFAM" id="SSF52374">
    <property type="entry name" value="Nucleotidylyl transferase"/>
    <property type="match status" value="1"/>
</dbReference>
<dbReference type="SUPFAM" id="SSF50677">
    <property type="entry name" value="ValRS/IleRS/LeuRS editing domain"/>
    <property type="match status" value="1"/>
</dbReference>
<dbReference type="PROSITE" id="PS00178">
    <property type="entry name" value="AA_TRNA_LIGASE_I"/>
    <property type="match status" value="1"/>
</dbReference>
<proteinExistence type="inferred from homology"/>
<protein>
    <recommendedName>
        <fullName evidence="1">Isoleucine--tRNA ligase</fullName>
        <ecNumber evidence="1">6.1.1.5</ecNumber>
    </recommendedName>
    <alternativeName>
        <fullName evidence="1">Isoleucyl-tRNA synthetase</fullName>
        <shortName evidence="1">IleRS</shortName>
    </alternativeName>
</protein>
<name>SYI_COREF</name>
<evidence type="ECO:0000255" key="1">
    <source>
        <dbReference type="HAMAP-Rule" id="MF_02003"/>
    </source>
</evidence>
<evidence type="ECO:0000305" key="2"/>
<sequence>MTEAVGGVYPLVDMTGGSSRFPEMEENVLDFWKRDDTFQASIDQRNDAEDYVFYDGPPFANGLPHYGHLLTGYVKDIVPRYQTMRGYRVPRVFGWDTHGLPAELEAEKQLGIKDKGEIESMGLAQFNDYCAKSVLQYTKEWEEYVTRQARWVDFENGYKTMDLTYMESVIWAFKELYDKGLIYQGFRVLPYSWAEHTPLSNQETRLDDSYKMRQDPTLTVTMPITGKIEGTGANEALIGANAIAWTTTPWTLPSNLALAVNPSVTYALVEVAGDGEEGFVGQQLLLARDLVGAYAKELGTDARIISEHPGTELIGLTYEPVFDFFRDHPNAFQILGADYVTTEDGTGIVHQAPAFGEDDMNVCNAADIAPVIPVDMDGKFTSLTPEYEGQLVFDANKDIIRDLKAKGRVFRHQTIEHSYPHSWRSGEPLIYMALPSWFVNVTKIRDRMVETNQDIEWMPAHIRDGQFGKWLEGARDWNISRSRYWGSPIPVWVSDDENYPRVDVYGSLDELEADFGVRPTSLHRPYIDELTRPNPDDPTGKSTMRRVPDVLDVWFDSGSMPFAQVHYPFENKDWFDTHAPADFIVEYIGQTRGWFYLLHVLSVGLFDRPAFKKVVAHGIVLGDDGLKMSKSKGNYPNVTEVFDRDGSDAMRWFLMSSPILRGGNLIVTEKGIREGVRQAQLPMWNAYSFLQLYASKKATWSVDSTDVLDRYILAKLHDLVADVTAALDATDIARACDQVRWFCDALTNWYVRRSRDRFWAGDEAHPEAFNTLYTVLETLTRVAAPLLPMTTEVIWRGLTGERSVHLTDFPSADSFPADADLVRTMDEIRGVCSAASSIRKAHKLRNRLPLPNLTVALPDSGRLADFLSIIRDEVNVKNVDLTSDVDAVGTFEVVVNAKVAGPRLGKDVQRVIKAVKAGNYERVGETVVADGIELQDGEYTERLVAANPDSTAQIDDVDGLVVLDMEVTPELEAEGWAADVIRGLQDARKSSGFEVSDRIQVTLSVPGDKQEWATRHADHIAGEVLATSFEVTQDDLGEDAHEVLKGVTASVARV</sequence>
<feature type="chain" id="PRO_0000098537" description="Isoleucine--tRNA ligase">
    <location>
        <begin position="1"/>
        <end position="1054"/>
    </location>
</feature>
<feature type="short sequence motif" description="'HIGH' region">
    <location>
        <begin position="58"/>
        <end position="68"/>
    </location>
</feature>
<feature type="short sequence motif" description="'KMSKS' region">
    <location>
        <begin position="627"/>
        <end position="631"/>
    </location>
</feature>
<feature type="binding site" evidence="1">
    <location>
        <position position="630"/>
    </location>
    <ligand>
        <name>ATP</name>
        <dbReference type="ChEBI" id="CHEBI:30616"/>
    </ligand>
</feature>
<accession>Q8FNV0</accession>
<gene>
    <name evidence="1" type="primary">ileS</name>
    <name type="ordered locus">CE2043</name>
</gene>
<reference key="1">
    <citation type="journal article" date="2003" name="Genome Res.">
        <title>Comparative complete genome sequence analysis of the amino acid replacements responsible for the thermostability of Corynebacterium efficiens.</title>
        <authorList>
            <person name="Nishio Y."/>
            <person name="Nakamura Y."/>
            <person name="Kawarabayasi Y."/>
            <person name="Usuda Y."/>
            <person name="Kimura E."/>
            <person name="Sugimoto S."/>
            <person name="Matsui K."/>
            <person name="Yamagishi A."/>
            <person name="Kikuchi H."/>
            <person name="Ikeo K."/>
            <person name="Gojobori T."/>
        </authorList>
    </citation>
    <scope>NUCLEOTIDE SEQUENCE [LARGE SCALE GENOMIC DNA]</scope>
    <source>
        <strain>DSM 44549 / YS-314 / AJ 12310 / JCM 11189 / NBRC 100395</strain>
    </source>
</reference>
<keyword id="KW-0030">Aminoacyl-tRNA synthetase</keyword>
<keyword id="KW-0067">ATP-binding</keyword>
<keyword id="KW-0963">Cytoplasm</keyword>
<keyword id="KW-0436">Ligase</keyword>
<keyword id="KW-0479">Metal-binding</keyword>
<keyword id="KW-0547">Nucleotide-binding</keyword>
<keyword id="KW-0648">Protein biosynthesis</keyword>
<keyword id="KW-1185">Reference proteome</keyword>
<keyword id="KW-0862">Zinc</keyword>